<accession>Q58255</accession>
<evidence type="ECO:0000250" key="1">
    <source>
        <dbReference type="UniProtKB" id="P11562"/>
    </source>
</evidence>
<evidence type="ECO:0000305" key="2"/>
<comment type="function">
    <text evidence="1">Component of the methyl-coenzyme M reductase (MCR) I that catalyzes the reductive cleavage of methyl-coenzyme M (CoM-S-CH3 or 2-(methylthio)ethanesulfonate) using coenzyme B (CoB or 7-mercaptoheptanoylthreonine phosphate) as reductant which results in the production of methane and the mixed heterodisulfide of CoB and CoM (CoM-S-S-CoB). This is the final step in methanogenesis.</text>
</comment>
<comment type="catalytic activity">
    <reaction evidence="1">
        <text>coenzyme B + methyl-coenzyme M = methane + coenzyme M-coenzyme B heterodisulfide</text>
        <dbReference type="Rhea" id="RHEA:12532"/>
        <dbReference type="ChEBI" id="CHEBI:16183"/>
        <dbReference type="ChEBI" id="CHEBI:58286"/>
        <dbReference type="ChEBI" id="CHEBI:58411"/>
        <dbReference type="ChEBI" id="CHEBI:58596"/>
        <dbReference type="EC" id="2.8.4.1"/>
    </reaction>
    <physiologicalReaction direction="left-to-right" evidence="1">
        <dbReference type="Rhea" id="RHEA:12533"/>
    </physiologicalReaction>
</comment>
<comment type="cofactor">
    <cofactor evidence="1">
        <name>coenzyme F430</name>
        <dbReference type="ChEBI" id="CHEBI:60540"/>
    </cofactor>
    <text evidence="1">Binds 2 coenzyme F430 non-covalently per MCR complex. Coenzyme F430 is a yellow nickel porphinoid. Methyl-coenzyme-M reductase is activated when the enzyme-bound coenzyme F430 is reduced to the Ni(I) oxidation state.</text>
</comment>
<comment type="pathway">
    <text evidence="1">One-carbon metabolism; methyl-coenzyme M reduction; methane from methyl-coenzyme M: step 1/1.</text>
</comment>
<comment type="subunit">
    <text evidence="1">MCR is a hexamer of two alpha, two beta, and two gamma chains, forming a dimer of heterotrimers.</text>
</comment>
<comment type="subcellular location">
    <subcellularLocation>
        <location evidence="1">Cytoplasm</location>
    </subcellularLocation>
</comment>
<comment type="similarity">
    <text evidence="2">Belongs to the methyl-coenzyme M reductase gamma subunit family.</text>
</comment>
<proteinExistence type="inferred from homology"/>
<keyword id="KW-0963">Cytoplasm</keyword>
<keyword id="KW-0484">Methanogenesis</keyword>
<keyword id="KW-1185">Reference proteome</keyword>
<keyword id="KW-0808">Transferase</keyword>
<reference key="1">
    <citation type="journal article" date="1996" name="Science">
        <title>Complete genome sequence of the methanogenic archaeon, Methanococcus jannaschii.</title>
        <authorList>
            <person name="Bult C.J."/>
            <person name="White O."/>
            <person name="Olsen G.J."/>
            <person name="Zhou L."/>
            <person name="Fleischmann R.D."/>
            <person name="Sutton G.G."/>
            <person name="Blake J.A."/>
            <person name="FitzGerald L.M."/>
            <person name="Clayton R.A."/>
            <person name="Gocayne J.D."/>
            <person name="Kerlavage A.R."/>
            <person name="Dougherty B.A."/>
            <person name="Tomb J.-F."/>
            <person name="Adams M.D."/>
            <person name="Reich C.I."/>
            <person name="Overbeek R."/>
            <person name="Kirkness E.F."/>
            <person name="Weinstock K.G."/>
            <person name="Merrick J.M."/>
            <person name="Glodek A."/>
            <person name="Scott J.L."/>
            <person name="Geoghagen N.S.M."/>
            <person name="Weidman J.F."/>
            <person name="Fuhrmann J.L."/>
            <person name="Nguyen D."/>
            <person name="Utterback T.R."/>
            <person name="Kelley J.M."/>
            <person name="Peterson J.D."/>
            <person name="Sadow P.W."/>
            <person name="Hanna M.C."/>
            <person name="Cotton M.D."/>
            <person name="Roberts K.M."/>
            <person name="Hurst M.A."/>
            <person name="Kaine B.P."/>
            <person name="Borodovsky M."/>
            <person name="Klenk H.-P."/>
            <person name="Fraser C.M."/>
            <person name="Smith H.O."/>
            <person name="Woese C.R."/>
            <person name="Venter J.C."/>
        </authorList>
    </citation>
    <scope>NUCLEOTIDE SEQUENCE [LARGE SCALE GENOMIC DNA]</scope>
    <source>
        <strain>ATCC 43067 / DSM 2661 / JAL-1 / JCM 10045 / NBRC 100440</strain>
    </source>
</reference>
<organism>
    <name type="scientific">Methanocaldococcus jannaschii (strain ATCC 43067 / DSM 2661 / JAL-1 / JCM 10045 / NBRC 100440)</name>
    <name type="common">Methanococcus jannaschii</name>
    <dbReference type="NCBI Taxonomy" id="243232"/>
    <lineage>
        <taxon>Archaea</taxon>
        <taxon>Methanobacteriati</taxon>
        <taxon>Methanobacteriota</taxon>
        <taxon>Methanomada group</taxon>
        <taxon>Methanococci</taxon>
        <taxon>Methanococcales</taxon>
        <taxon>Methanocaldococcaceae</taxon>
        <taxon>Methanocaldococcus</taxon>
    </lineage>
</organism>
<dbReference type="EC" id="2.8.4.1" evidence="1"/>
<dbReference type="EMBL" id="L77117">
    <property type="protein sequence ID" value="AAB98850.1"/>
    <property type="molecule type" value="Genomic_DNA"/>
</dbReference>
<dbReference type="PIR" id="E64405">
    <property type="entry name" value="E64405"/>
</dbReference>
<dbReference type="RefSeq" id="WP_010870359.1">
    <property type="nucleotide sequence ID" value="NC_000909.1"/>
</dbReference>
<dbReference type="SMR" id="Q58255"/>
<dbReference type="FunCoup" id="Q58255">
    <property type="interactions" value="93"/>
</dbReference>
<dbReference type="STRING" id="243232.MJ_0845"/>
<dbReference type="PaxDb" id="243232-MJ_0845"/>
<dbReference type="EnsemblBacteria" id="AAB98850">
    <property type="protein sequence ID" value="AAB98850"/>
    <property type="gene ID" value="MJ_0845"/>
</dbReference>
<dbReference type="GeneID" id="1451733"/>
<dbReference type="KEGG" id="mja:MJ_0845"/>
<dbReference type="eggNOG" id="arCOG04858">
    <property type="taxonomic scope" value="Archaea"/>
</dbReference>
<dbReference type="HOGENOM" id="CLU_1092436_0_0_2"/>
<dbReference type="InParanoid" id="Q58255"/>
<dbReference type="OrthoDB" id="52520at2157"/>
<dbReference type="PhylomeDB" id="Q58255"/>
<dbReference type="UniPathway" id="UPA00646">
    <property type="reaction ID" value="UER00699"/>
</dbReference>
<dbReference type="Proteomes" id="UP000000805">
    <property type="component" value="Chromosome"/>
</dbReference>
<dbReference type="GO" id="GO:0005737">
    <property type="term" value="C:cytoplasm"/>
    <property type="evidence" value="ECO:0007669"/>
    <property type="project" value="UniProtKB-SubCell"/>
</dbReference>
<dbReference type="GO" id="GO:0050524">
    <property type="term" value="F:coenzyme-B sulfoethylthiotransferase activity"/>
    <property type="evidence" value="ECO:0007669"/>
    <property type="project" value="UniProtKB-EC"/>
</dbReference>
<dbReference type="GO" id="GO:0015948">
    <property type="term" value="P:methanogenesis"/>
    <property type="evidence" value="ECO:0007669"/>
    <property type="project" value="UniProtKB-KW"/>
</dbReference>
<dbReference type="CDD" id="cd00539">
    <property type="entry name" value="MCR_gamma"/>
    <property type="match status" value="1"/>
</dbReference>
<dbReference type="Gene3D" id="3.90.320.20">
    <property type="entry name" value="Methyl-coenzyme M reductase, gamma subunit"/>
    <property type="match status" value="1"/>
</dbReference>
<dbReference type="InterPro" id="IPR009024">
    <property type="entry name" value="Me_CoM_Rdtase_Fd-like_fold"/>
</dbReference>
<dbReference type="InterPro" id="IPR003178">
    <property type="entry name" value="Me_CoM_Rdtase_gsu"/>
</dbReference>
<dbReference type="InterPro" id="IPR036994">
    <property type="entry name" value="Me_CoM_Rdtase_gsu_sf"/>
</dbReference>
<dbReference type="NCBIfam" id="TIGR03259">
    <property type="entry name" value="met_CoM_red_gam"/>
    <property type="match status" value="1"/>
</dbReference>
<dbReference type="Pfam" id="PF02240">
    <property type="entry name" value="MCR_gamma"/>
    <property type="match status" value="1"/>
</dbReference>
<dbReference type="PIRSF" id="PIRSF000264">
    <property type="entry name" value="Meth_CoM_rd_gama"/>
    <property type="match status" value="1"/>
</dbReference>
<dbReference type="SUPFAM" id="SSF55088">
    <property type="entry name" value="Methyl-coenzyme M reductase subunits"/>
    <property type="match status" value="1"/>
</dbReference>
<protein>
    <recommendedName>
        <fullName>Methyl-coenzyme M reductase I subunit gamma</fullName>
        <shortName>MCR I gamma</shortName>
        <ecNumber evidence="1">2.8.4.1</ecNumber>
    </recommendedName>
    <alternativeName>
        <fullName>Coenzyme-B sulfoethylthiotransferase gamma</fullName>
    </alternativeName>
</protein>
<feature type="chain" id="PRO_0000147476" description="Methyl-coenzyme M reductase I subunit gamma">
    <location>
        <begin position="1"/>
        <end position="260"/>
    </location>
</feature>
<feature type="binding site" evidence="1">
    <location>
        <position position="123"/>
    </location>
    <ligand>
        <name>coenzyme M</name>
        <dbReference type="ChEBI" id="CHEBI:58319"/>
    </ligand>
</feature>
<name>MCRG_METJA</name>
<gene>
    <name type="primary">mcrG</name>
    <name type="ordered locus">MJ0845</name>
</gene>
<sequence length="260" mass="30174">MAYKPQFYPGQTKIAQNRRDHMNPDVQLEKLRDIPDDDVVKIMGHRQPGEDYKTVHPPLEEMDLPEDYVRDLVEPLNGAKEGHRIRYIQFTDSMYFAPAQPYDRARTYMWRFRGVDTGTLSGRQVIEMRESDLEALSKNFLIDTAFFDPARIGIRGATVHGHSLRLDENGLMFDALQRYVYDEKTGHVLYVKDQVGRPLDEPVDVGEPLPEEKLKEITTIYRIDGVPMREDEELLTVVKRIHRARTLGGFLPVEDVFEKL</sequence>